<reference key="1">
    <citation type="journal article" date="2006" name="PLoS Genet.">
        <title>Genome sequence of Rickettsia bellii illuminates the role of amoebae in gene exchanges between intracellular pathogens.</title>
        <authorList>
            <person name="Ogata H."/>
            <person name="La Scola B."/>
            <person name="Audic S."/>
            <person name="Renesto P."/>
            <person name="Blanc G."/>
            <person name="Robert C."/>
            <person name="Fournier P.-E."/>
            <person name="Claverie J.-M."/>
            <person name="Raoult D."/>
        </authorList>
    </citation>
    <scope>NUCLEOTIDE SEQUENCE [LARGE SCALE GENOMIC DNA]</scope>
    <source>
        <strain>RML369-C</strain>
    </source>
</reference>
<protein>
    <recommendedName>
        <fullName>Superoxide dismutase [Mn/Fe]</fullName>
        <ecNumber evidence="1">1.15.1.1</ecNumber>
    </recommendedName>
</protein>
<organism>
    <name type="scientific">Rickettsia bellii (strain RML369-C)</name>
    <dbReference type="NCBI Taxonomy" id="336407"/>
    <lineage>
        <taxon>Bacteria</taxon>
        <taxon>Pseudomonadati</taxon>
        <taxon>Pseudomonadota</taxon>
        <taxon>Alphaproteobacteria</taxon>
        <taxon>Rickettsiales</taxon>
        <taxon>Rickettsiaceae</taxon>
        <taxon>Rickettsieae</taxon>
        <taxon>Rickettsia</taxon>
        <taxon>belli group</taxon>
    </lineage>
</organism>
<name>SODF_RICBR</name>
<proteinExistence type="inferred from homology"/>
<gene>
    <name type="primary">sodB</name>
    <name type="ordered locus">RBE_1195</name>
</gene>
<keyword id="KW-0408">Iron</keyword>
<keyword id="KW-0464">Manganese</keyword>
<keyword id="KW-0479">Metal-binding</keyword>
<keyword id="KW-0560">Oxidoreductase</keyword>
<dbReference type="EC" id="1.15.1.1" evidence="1"/>
<dbReference type="EMBL" id="CP000087">
    <property type="protein sequence ID" value="ABE05276.1"/>
    <property type="molecule type" value="Genomic_DNA"/>
</dbReference>
<dbReference type="RefSeq" id="WP_011477854.1">
    <property type="nucleotide sequence ID" value="NC_007940.1"/>
</dbReference>
<dbReference type="SMR" id="Q1RH88"/>
<dbReference type="KEGG" id="rbe:RBE_1195"/>
<dbReference type="eggNOG" id="COG0605">
    <property type="taxonomic scope" value="Bacteria"/>
</dbReference>
<dbReference type="HOGENOM" id="CLU_031625_0_0_5"/>
<dbReference type="OrthoDB" id="9803125at2"/>
<dbReference type="Proteomes" id="UP000001951">
    <property type="component" value="Chromosome"/>
</dbReference>
<dbReference type="GO" id="GO:0046872">
    <property type="term" value="F:metal ion binding"/>
    <property type="evidence" value="ECO:0007669"/>
    <property type="project" value="UniProtKB-KW"/>
</dbReference>
<dbReference type="GO" id="GO:0004784">
    <property type="term" value="F:superoxide dismutase activity"/>
    <property type="evidence" value="ECO:0007669"/>
    <property type="project" value="UniProtKB-EC"/>
</dbReference>
<dbReference type="FunFam" id="3.55.40.20:FF:000001">
    <property type="entry name" value="Superoxide dismutase"/>
    <property type="match status" value="1"/>
</dbReference>
<dbReference type="Gene3D" id="1.10.287.990">
    <property type="entry name" value="Fe,Mn superoxide dismutase (SOD) domain"/>
    <property type="match status" value="1"/>
</dbReference>
<dbReference type="Gene3D" id="3.55.40.20">
    <property type="entry name" value="Iron/manganese superoxide dismutase, C-terminal domain"/>
    <property type="match status" value="1"/>
</dbReference>
<dbReference type="InterPro" id="IPR001189">
    <property type="entry name" value="Mn/Fe_SOD"/>
</dbReference>
<dbReference type="InterPro" id="IPR019833">
    <property type="entry name" value="Mn/Fe_SOD_BS"/>
</dbReference>
<dbReference type="InterPro" id="IPR019832">
    <property type="entry name" value="Mn/Fe_SOD_C"/>
</dbReference>
<dbReference type="InterPro" id="IPR019831">
    <property type="entry name" value="Mn/Fe_SOD_N"/>
</dbReference>
<dbReference type="InterPro" id="IPR036324">
    <property type="entry name" value="Mn/Fe_SOD_N_sf"/>
</dbReference>
<dbReference type="InterPro" id="IPR036314">
    <property type="entry name" value="SOD_C_sf"/>
</dbReference>
<dbReference type="PANTHER" id="PTHR42769">
    <property type="entry name" value="SUPEROXIDE DISMUTASE"/>
    <property type="match status" value="1"/>
</dbReference>
<dbReference type="PANTHER" id="PTHR42769:SF3">
    <property type="entry name" value="SUPEROXIDE DISMUTASE [FE] 2, CHLOROPLASTIC"/>
    <property type="match status" value="1"/>
</dbReference>
<dbReference type="Pfam" id="PF02777">
    <property type="entry name" value="Sod_Fe_C"/>
    <property type="match status" value="1"/>
</dbReference>
<dbReference type="Pfam" id="PF00081">
    <property type="entry name" value="Sod_Fe_N"/>
    <property type="match status" value="1"/>
</dbReference>
<dbReference type="PIRSF" id="PIRSF000349">
    <property type="entry name" value="SODismutase"/>
    <property type="match status" value="1"/>
</dbReference>
<dbReference type="PRINTS" id="PR01703">
    <property type="entry name" value="MNSODISMTASE"/>
</dbReference>
<dbReference type="SUPFAM" id="SSF54719">
    <property type="entry name" value="Fe,Mn superoxide dismutase (SOD), C-terminal domain"/>
    <property type="match status" value="1"/>
</dbReference>
<dbReference type="SUPFAM" id="SSF46609">
    <property type="entry name" value="Fe,Mn superoxide dismutase (SOD), N-terminal domain"/>
    <property type="match status" value="1"/>
</dbReference>
<dbReference type="PROSITE" id="PS00088">
    <property type="entry name" value="SOD_MN"/>
    <property type="match status" value="1"/>
</dbReference>
<accession>Q1RH88</accession>
<feature type="chain" id="PRO_0000286501" description="Superoxide dismutase [Mn/Fe]">
    <location>
        <begin position="1"/>
        <end position="209"/>
    </location>
</feature>
<feature type="binding site" evidence="1">
    <location>
        <position position="38"/>
    </location>
    <ligand>
        <name>Fe(3+)</name>
        <dbReference type="ChEBI" id="CHEBI:29034"/>
    </ligand>
</feature>
<feature type="binding site" evidence="1">
    <location>
        <position position="38"/>
    </location>
    <ligand>
        <name>Mn(2+)</name>
        <dbReference type="ChEBI" id="CHEBI:29035"/>
    </ligand>
</feature>
<feature type="binding site" evidence="1">
    <location>
        <position position="90"/>
    </location>
    <ligand>
        <name>Fe(3+)</name>
        <dbReference type="ChEBI" id="CHEBI:29034"/>
    </ligand>
</feature>
<feature type="binding site" evidence="1">
    <location>
        <position position="90"/>
    </location>
    <ligand>
        <name>Mn(2+)</name>
        <dbReference type="ChEBI" id="CHEBI:29035"/>
    </ligand>
</feature>
<feature type="binding site" evidence="1">
    <location>
        <position position="172"/>
    </location>
    <ligand>
        <name>Fe(3+)</name>
        <dbReference type="ChEBI" id="CHEBI:29034"/>
    </ligand>
</feature>
<feature type="binding site" evidence="1">
    <location>
        <position position="172"/>
    </location>
    <ligand>
        <name>Mn(2+)</name>
        <dbReference type="ChEBI" id="CHEBI:29035"/>
    </ligand>
</feature>
<feature type="binding site" evidence="1">
    <location>
        <position position="176"/>
    </location>
    <ligand>
        <name>Fe(3+)</name>
        <dbReference type="ChEBI" id="CHEBI:29034"/>
    </ligand>
</feature>
<feature type="binding site" evidence="1">
    <location>
        <position position="176"/>
    </location>
    <ligand>
        <name>Mn(2+)</name>
        <dbReference type="ChEBI" id="CHEBI:29035"/>
    </ligand>
</feature>
<evidence type="ECO:0000250" key="1">
    <source>
        <dbReference type="UniProtKB" id="P80293"/>
    </source>
</evidence>
<evidence type="ECO:0000305" key="2"/>
<comment type="function">
    <text evidence="1">Destroys superoxide anion radicals which are normally produced within the cells and which are toxic to biological systems. Catalyzes the dismutation of superoxide anion radicals into O2 and H2O2 by successive reduction and oxidation of the transition metal ion at the active site.</text>
</comment>
<comment type="catalytic activity">
    <reaction evidence="1">
        <text>2 superoxide + 2 H(+) = H2O2 + O2</text>
        <dbReference type="Rhea" id="RHEA:20696"/>
        <dbReference type="ChEBI" id="CHEBI:15378"/>
        <dbReference type="ChEBI" id="CHEBI:15379"/>
        <dbReference type="ChEBI" id="CHEBI:16240"/>
        <dbReference type="ChEBI" id="CHEBI:18421"/>
        <dbReference type="EC" id="1.15.1.1"/>
    </reaction>
    <physiologicalReaction direction="left-to-right" evidence="1">
        <dbReference type="Rhea" id="RHEA:20697"/>
    </physiologicalReaction>
</comment>
<comment type="cofactor">
    <cofactor evidence="1">
        <name>Mn(2+)</name>
        <dbReference type="ChEBI" id="CHEBI:29035"/>
    </cofactor>
    <cofactor evidence="1">
        <name>Fe(3+)</name>
        <dbReference type="ChEBI" id="CHEBI:29034"/>
    </cofactor>
    <text evidence="1">Binds 1 Mn(2+) or Fe(3+) ion per subunit.</text>
</comment>
<comment type="similarity">
    <text evidence="2">Belongs to the iron/manganese superoxide dismutase family.</text>
</comment>
<sequence>MTYCDKSNQTSYPFVLPNLPYEKESFKPHFTAETFEYHHGKHHNAYVQNLNNLLKDKEELQKKNLEEIIDWSSQNQNIAIFNNAAQVWNHTFFWHSIKPNGGGKPSGKILKQINEDFGSFEEFCEQFKAEATGQFGSGWAWLVYHNNRLQIVKTANAGTPIANGMQPLLACDVWEHAYYIDYRNKRPDYVDIFIKHMINWEFVENNLTK</sequence>